<dbReference type="EMBL" id="AC007764">
    <property type="protein sequence ID" value="AAF24580.1"/>
    <property type="molecule type" value="Genomic_DNA"/>
</dbReference>
<dbReference type="EMBL" id="CP002684">
    <property type="protein sequence ID" value="AEE34203.1"/>
    <property type="molecule type" value="Genomic_DNA"/>
</dbReference>
<dbReference type="EMBL" id="BT010486">
    <property type="protein sequence ID" value="AAQ65109.1"/>
    <property type="molecule type" value="mRNA"/>
</dbReference>
<dbReference type="EMBL" id="AK175255">
    <property type="protein sequence ID" value="BAD43018.1"/>
    <property type="molecule type" value="mRNA"/>
</dbReference>
<dbReference type="EMBL" id="AK176738">
    <property type="protein sequence ID" value="BAD44501.1"/>
    <property type="molecule type" value="mRNA"/>
</dbReference>
<dbReference type="PIR" id="A96666">
    <property type="entry name" value="A96666"/>
</dbReference>
<dbReference type="RefSeq" id="NP_176598.1">
    <property type="nucleotide sequence ID" value="NM_105089.3"/>
</dbReference>
<dbReference type="SMR" id="Q9SH66"/>
<dbReference type="FunCoup" id="Q9SH66">
    <property type="interactions" value="154"/>
</dbReference>
<dbReference type="STRING" id="3702.Q9SH66"/>
<dbReference type="GlyCosmos" id="Q9SH66">
    <property type="glycosylation" value="2 sites, No reported glycans"/>
</dbReference>
<dbReference type="GlyGen" id="Q9SH66">
    <property type="glycosylation" value="2 sites"/>
</dbReference>
<dbReference type="iPTMnet" id="Q9SH66"/>
<dbReference type="PaxDb" id="3702-AT1G64160.1"/>
<dbReference type="ProteomicsDB" id="222218"/>
<dbReference type="EnsemblPlants" id="AT1G64160.1">
    <property type="protein sequence ID" value="AT1G64160.1"/>
    <property type="gene ID" value="AT1G64160"/>
</dbReference>
<dbReference type="GeneID" id="842720"/>
<dbReference type="Gramene" id="AT1G64160.1">
    <property type="protein sequence ID" value="AT1G64160.1"/>
    <property type="gene ID" value="AT1G64160"/>
</dbReference>
<dbReference type="KEGG" id="ath:AT1G64160"/>
<dbReference type="Araport" id="AT1G64160"/>
<dbReference type="TAIR" id="AT1G64160">
    <property type="gene designation" value="DIR5"/>
</dbReference>
<dbReference type="eggNOG" id="ENOG502RXV9">
    <property type="taxonomic scope" value="Eukaryota"/>
</dbReference>
<dbReference type="HOGENOM" id="CLU_087111_0_0_1"/>
<dbReference type="InParanoid" id="Q9SH66"/>
<dbReference type="OMA" id="MSHGDEP"/>
<dbReference type="OrthoDB" id="674745at2759"/>
<dbReference type="PhylomeDB" id="Q9SH66"/>
<dbReference type="PRO" id="PR:Q9SH66"/>
<dbReference type="Proteomes" id="UP000006548">
    <property type="component" value="Chromosome 1"/>
</dbReference>
<dbReference type="ExpressionAtlas" id="Q9SH66">
    <property type="expression patterns" value="baseline and differential"/>
</dbReference>
<dbReference type="GO" id="GO:0048046">
    <property type="term" value="C:apoplast"/>
    <property type="evidence" value="ECO:0007669"/>
    <property type="project" value="UniProtKB-SubCell"/>
</dbReference>
<dbReference type="GO" id="GO:0042349">
    <property type="term" value="F:guiding stereospecific synthesis activity"/>
    <property type="evidence" value="ECO:0000314"/>
    <property type="project" value="TAIR"/>
</dbReference>
<dbReference type="GO" id="GO:1901599">
    <property type="term" value="P:(-)-pinoresinol biosynthetic process"/>
    <property type="evidence" value="ECO:0000314"/>
    <property type="project" value="TAIR"/>
</dbReference>
<dbReference type="FunFam" id="2.40.480.10:FF:000002">
    <property type="entry name" value="Dirigent protein"/>
    <property type="match status" value="1"/>
</dbReference>
<dbReference type="Gene3D" id="2.40.480.10">
    <property type="entry name" value="Allene oxide cyclase-like"/>
    <property type="match status" value="1"/>
</dbReference>
<dbReference type="InterPro" id="IPR044859">
    <property type="entry name" value="Allene_oxi_cyc_Dirigent"/>
</dbReference>
<dbReference type="InterPro" id="IPR004265">
    <property type="entry name" value="Dirigent"/>
</dbReference>
<dbReference type="PANTHER" id="PTHR46442">
    <property type="entry name" value="DIRIGENT PROTEIN"/>
    <property type="match status" value="1"/>
</dbReference>
<dbReference type="PANTHER" id="PTHR46442:SF6">
    <property type="entry name" value="DIRIGENT PROTEIN 5"/>
    <property type="match status" value="1"/>
</dbReference>
<dbReference type="Pfam" id="PF03018">
    <property type="entry name" value="Dirigent"/>
    <property type="match status" value="1"/>
</dbReference>
<proteinExistence type="evidence at transcript level"/>
<gene>
    <name type="primary">DIR5</name>
    <name type="ordered locus">At1g64160</name>
    <name type="ORF">F22C12.8</name>
</gene>
<feature type="signal peptide" evidence="1">
    <location>
        <begin position="1"/>
        <end position="23"/>
    </location>
</feature>
<feature type="chain" id="PRO_0000422836" description="Dirigent protein 5">
    <location>
        <begin position="24"/>
        <end position="182"/>
    </location>
</feature>
<feature type="glycosylation site" description="N-linked (GlcNAc...) asparagine" evidence="2">
    <location>
        <position position="54"/>
    </location>
</feature>
<feature type="glycosylation site" description="N-linked (GlcNAc...) asparagine" evidence="2">
    <location>
        <position position="118"/>
    </location>
</feature>
<feature type="disulfide bond" evidence="1">
    <location>
        <begin position="35"/>
        <end position="181"/>
    </location>
</feature>
<organism>
    <name type="scientific">Arabidopsis thaliana</name>
    <name type="common">Mouse-ear cress</name>
    <dbReference type="NCBI Taxonomy" id="3702"/>
    <lineage>
        <taxon>Eukaryota</taxon>
        <taxon>Viridiplantae</taxon>
        <taxon>Streptophyta</taxon>
        <taxon>Embryophyta</taxon>
        <taxon>Tracheophyta</taxon>
        <taxon>Spermatophyta</taxon>
        <taxon>Magnoliopsida</taxon>
        <taxon>eudicotyledons</taxon>
        <taxon>Gunneridae</taxon>
        <taxon>Pentapetalae</taxon>
        <taxon>rosids</taxon>
        <taxon>malvids</taxon>
        <taxon>Brassicales</taxon>
        <taxon>Brassicaceae</taxon>
        <taxon>Camelineae</taxon>
        <taxon>Arabidopsis</taxon>
    </lineage>
</organism>
<comment type="function">
    <text evidence="3">Dirigent proteins impart stereoselectivity on the phenoxy radical-coupling reaction, yielding optically active lignans from two molecules of coniferyl alcohol in the biosynthesis of lignans, flavonolignans, and alkaloids and thus plays a central role in plant secondary metabolism. Enantiocomplementary dirigent protein that mediates the laccase-catalyzed enantioselective oxidative phenol coupling of (E)-coniferyl alcohol to (-)-pinoresinol.</text>
</comment>
<comment type="subunit">
    <text evidence="1">Homodimer.</text>
</comment>
<comment type="subcellular location">
    <subcellularLocation>
        <location evidence="1">Secreted</location>
        <location evidence="1">Extracellular space</location>
        <location evidence="1">Apoplast</location>
    </subcellularLocation>
</comment>
<comment type="tissue specificity">
    <text evidence="3">Confined to shoot meristem, vascular region of cotyledons and siliques abscission zone.</text>
</comment>
<comment type="similarity">
    <text evidence="4">Belongs to the plant dirigent protein family.</text>
</comment>
<name>DIR5_ARATH</name>
<evidence type="ECO:0000250" key="1"/>
<evidence type="ECO:0000255" key="2"/>
<evidence type="ECO:0000269" key="3">
    <source>
    </source>
</evidence>
<evidence type="ECO:0000305" key="4"/>
<accession>Q9SH66</accession>
<keyword id="KW-0052">Apoplast</keyword>
<keyword id="KW-1015">Disulfide bond</keyword>
<keyword id="KW-0325">Glycoprotein</keyword>
<keyword id="KW-1185">Reference proteome</keyword>
<keyword id="KW-0964">Secreted</keyword>
<keyword id="KW-0732">Signal</keyword>
<protein>
    <recommendedName>
        <fullName>Dirigent protein 5</fullName>
        <shortName>AtDIR5</shortName>
    </recommendedName>
</protein>
<sequence length="182" mass="20726">MVGQMKSFLFLFVFLVLTKTVISARKPSKSQPKPCKNFVLYYHDIMFGVDDVQNATSAAVTNPPGLGNFKFGKLVIFDDPMTIDKNFQSEPVARAQGFYFYDMKNDYNAWFAYTLVFNSTQHKGTLNIMGADLMMVQSRDLSVVGGTGDFFMSRGIVTFETDTFEGAKYFRVKMDIKLYECY</sequence>
<reference key="1">
    <citation type="journal article" date="2000" name="Nature">
        <title>Sequence and analysis of chromosome 1 of the plant Arabidopsis thaliana.</title>
        <authorList>
            <person name="Theologis A."/>
            <person name="Ecker J.R."/>
            <person name="Palm C.J."/>
            <person name="Federspiel N.A."/>
            <person name="Kaul S."/>
            <person name="White O."/>
            <person name="Alonso J."/>
            <person name="Altafi H."/>
            <person name="Araujo R."/>
            <person name="Bowman C.L."/>
            <person name="Brooks S.Y."/>
            <person name="Buehler E."/>
            <person name="Chan A."/>
            <person name="Chao Q."/>
            <person name="Chen H."/>
            <person name="Cheuk R.F."/>
            <person name="Chin C.W."/>
            <person name="Chung M.K."/>
            <person name="Conn L."/>
            <person name="Conway A.B."/>
            <person name="Conway A.R."/>
            <person name="Creasy T.H."/>
            <person name="Dewar K."/>
            <person name="Dunn P."/>
            <person name="Etgu P."/>
            <person name="Feldblyum T.V."/>
            <person name="Feng J.-D."/>
            <person name="Fong B."/>
            <person name="Fujii C.Y."/>
            <person name="Gill J.E."/>
            <person name="Goldsmith A.D."/>
            <person name="Haas B."/>
            <person name="Hansen N.F."/>
            <person name="Hughes B."/>
            <person name="Huizar L."/>
            <person name="Hunter J.L."/>
            <person name="Jenkins J."/>
            <person name="Johnson-Hopson C."/>
            <person name="Khan S."/>
            <person name="Khaykin E."/>
            <person name="Kim C.J."/>
            <person name="Koo H.L."/>
            <person name="Kremenetskaia I."/>
            <person name="Kurtz D.B."/>
            <person name="Kwan A."/>
            <person name="Lam B."/>
            <person name="Langin-Hooper S."/>
            <person name="Lee A."/>
            <person name="Lee J.M."/>
            <person name="Lenz C.A."/>
            <person name="Li J.H."/>
            <person name="Li Y.-P."/>
            <person name="Lin X."/>
            <person name="Liu S.X."/>
            <person name="Liu Z.A."/>
            <person name="Luros J.S."/>
            <person name="Maiti R."/>
            <person name="Marziali A."/>
            <person name="Militscher J."/>
            <person name="Miranda M."/>
            <person name="Nguyen M."/>
            <person name="Nierman W.C."/>
            <person name="Osborne B.I."/>
            <person name="Pai G."/>
            <person name="Peterson J."/>
            <person name="Pham P.K."/>
            <person name="Rizzo M."/>
            <person name="Rooney T."/>
            <person name="Rowley D."/>
            <person name="Sakano H."/>
            <person name="Salzberg S.L."/>
            <person name="Schwartz J.R."/>
            <person name="Shinn P."/>
            <person name="Southwick A.M."/>
            <person name="Sun H."/>
            <person name="Tallon L.J."/>
            <person name="Tambunga G."/>
            <person name="Toriumi M.J."/>
            <person name="Town C.D."/>
            <person name="Utterback T."/>
            <person name="Van Aken S."/>
            <person name="Vaysberg M."/>
            <person name="Vysotskaia V.S."/>
            <person name="Walker M."/>
            <person name="Wu D."/>
            <person name="Yu G."/>
            <person name="Fraser C.M."/>
            <person name="Venter J.C."/>
            <person name="Davis R.W."/>
        </authorList>
    </citation>
    <scope>NUCLEOTIDE SEQUENCE [LARGE SCALE GENOMIC DNA]</scope>
    <source>
        <strain>cv. Columbia</strain>
    </source>
</reference>
<reference key="2">
    <citation type="journal article" date="2017" name="Plant J.">
        <title>Araport11: a complete reannotation of the Arabidopsis thaliana reference genome.</title>
        <authorList>
            <person name="Cheng C.Y."/>
            <person name="Krishnakumar V."/>
            <person name="Chan A.P."/>
            <person name="Thibaud-Nissen F."/>
            <person name="Schobel S."/>
            <person name="Town C.D."/>
        </authorList>
    </citation>
    <scope>GENOME REANNOTATION</scope>
    <source>
        <strain>cv. Columbia</strain>
    </source>
</reference>
<reference key="3">
    <citation type="journal article" date="2003" name="Science">
        <title>Empirical analysis of transcriptional activity in the Arabidopsis genome.</title>
        <authorList>
            <person name="Yamada K."/>
            <person name="Lim J."/>
            <person name="Dale J.M."/>
            <person name="Chen H."/>
            <person name="Shinn P."/>
            <person name="Palm C.J."/>
            <person name="Southwick A.M."/>
            <person name="Wu H.C."/>
            <person name="Kim C.J."/>
            <person name="Nguyen M."/>
            <person name="Pham P.K."/>
            <person name="Cheuk R.F."/>
            <person name="Karlin-Newmann G."/>
            <person name="Liu S.X."/>
            <person name="Lam B."/>
            <person name="Sakano H."/>
            <person name="Wu T."/>
            <person name="Yu G."/>
            <person name="Miranda M."/>
            <person name="Quach H.L."/>
            <person name="Tripp M."/>
            <person name="Chang C.H."/>
            <person name="Lee J.M."/>
            <person name="Toriumi M.J."/>
            <person name="Chan M.M."/>
            <person name="Tang C.C."/>
            <person name="Onodera C.S."/>
            <person name="Deng J.M."/>
            <person name="Akiyama K."/>
            <person name="Ansari Y."/>
            <person name="Arakawa T."/>
            <person name="Banh J."/>
            <person name="Banno F."/>
            <person name="Bowser L."/>
            <person name="Brooks S.Y."/>
            <person name="Carninci P."/>
            <person name="Chao Q."/>
            <person name="Choy N."/>
            <person name="Enju A."/>
            <person name="Goldsmith A.D."/>
            <person name="Gurjal M."/>
            <person name="Hansen N.F."/>
            <person name="Hayashizaki Y."/>
            <person name="Johnson-Hopson C."/>
            <person name="Hsuan V.W."/>
            <person name="Iida K."/>
            <person name="Karnes M."/>
            <person name="Khan S."/>
            <person name="Koesema E."/>
            <person name="Ishida J."/>
            <person name="Jiang P.X."/>
            <person name="Jones T."/>
            <person name="Kawai J."/>
            <person name="Kamiya A."/>
            <person name="Meyers C."/>
            <person name="Nakajima M."/>
            <person name="Narusaka M."/>
            <person name="Seki M."/>
            <person name="Sakurai T."/>
            <person name="Satou M."/>
            <person name="Tamse R."/>
            <person name="Vaysberg M."/>
            <person name="Wallender E.K."/>
            <person name="Wong C."/>
            <person name="Yamamura Y."/>
            <person name="Yuan S."/>
            <person name="Shinozaki K."/>
            <person name="Davis R.W."/>
            <person name="Theologis A."/>
            <person name="Ecker J.R."/>
        </authorList>
    </citation>
    <scope>NUCLEOTIDE SEQUENCE [LARGE SCALE MRNA]</scope>
    <source>
        <strain>cv. Columbia</strain>
    </source>
</reference>
<reference key="4">
    <citation type="submission" date="2004-09" db="EMBL/GenBank/DDBJ databases">
        <title>Large-scale analysis of RIKEN Arabidopsis full-length (RAFL) cDNAs.</title>
        <authorList>
            <person name="Totoki Y."/>
            <person name="Seki M."/>
            <person name="Ishida J."/>
            <person name="Nakajima M."/>
            <person name="Enju A."/>
            <person name="Kamiya A."/>
            <person name="Narusaka M."/>
            <person name="Shin-i T."/>
            <person name="Nakagawa M."/>
            <person name="Sakamoto N."/>
            <person name="Oishi K."/>
            <person name="Kohara Y."/>
            <person name="Kobayashi M."/>
            <person name="Toyoda A."/>
            <person name="Sakaki Y."/>
            <person name="Sakurai T."/>
            <person name="Iida K."/>
            <person name="Akiyama K."/>
            <person name="Satou M."/>
            <person name="Toyoda T."/>
            <person name="Konagaya A."/>
            <person name="Carninci P."/>
            <person name="Kawai J."/>
            <person name="Hayashizaki Y."/>
            <person name="Shinozaki K."/>
        </authorList>
    </citation>
    <scope>NUCLEOTIDE SEQUENCE [LARGE SCALE MRNA]</scope>
    <source>
        <strain>cv. Columbia</strain>
    </source>
</reference>
<reference key="5">
    <citation type="journal article" date="2007" name="Phytochemistry">
        <title>Dirigent proteins in conifer defense II: Extended gene discovery, phylogeny, and constitutive and stress-induced gene expression in spruce (Picea spp.).</title>
        <authorList>
            <person name="Ralph S.G."/>
            <person name="Jancsik S."/>
            <person name="Bohlmann J."/>
        </authorList>
    </citation>
    <scope>GENE FAMILY</scope>
    <scope>NOMENCLATURE</scope>
</reference>
<reference key="6">
    <citation type="journal article" date="2012" name="J. Biol. Chem.">
        <title>Opposite stereoselectivities of dirigent proteins in Arabidopsis and schizandra species.</title>
        <authorList>
            <person name="Kim K.-W."/>
            <person name="Moinuddin S.G.A."/>
            <person name="Atwell K.M."/>
            <person name="Costa M.A."/>
            <person name="Davin L.B."/>
            <person name="Lewis N.G."/>
        </authorList>
    </citation>
    <scope>FUNCTION</scope>
    <scope>TISSUE SPECIFICITY</scope>
    <scope>GENE FAMILY</scope>
    <source>
        <strain>cv. Columbia</strain>
    </source>
</reference>